<dbReference type="EMBL" id="X17403">
    <property type="protein sequence ID" value="CAA35328.1"/>
    <property type="molecule type" value="Genomic_DNA"/>
</dbReference>
<dbReference type="PIR" id="S09875">
    <property type="entry name" value="S09875"/>
</dbReference>
<dbReference type="Proteomes" id="UP000008991">
    <property type="component" value="Segment"/>
</dbReference>
<sequence>RFDSRGFPSLHPIDVNGSLFWHQNQRDFPKCRNNSAPLTQMGGRRVRWEVYISRARLVNRQIAWRRHPRCFDLHRRHRDRSSLRGRERCIGTRIPRAKSDVSTAYRVYRPTPLASYACYTVFGLGSIHPRFLML</sequence>
<accession>P16836</accession>
<gene>
    <name type="primary">UL126</name>
</gene>
<feature type="chain" id="PRO_0000115361" description="Uncharacterized protein UL126">
    <location>
        <begin position="1"/>
        <end position="134"/>
    </location>
</feature>
<protein>
    <recommendedName>
        <fullName>Uncharacterized protein UL126</fullName>
    </recommendedName>
</protein>
<reference key="1">
    <citation type="journal article" date="1990" name="Curr. Top. Microbiol. Immunol.">
        <title>Analysis of the protein-coding content of the sequence of human cytomegalovirus strain AD169.</title>
        <authorList>
            <person name="Chee M.S."/>
            <person name="Bankier A.T."/>
            <person name="Beck S."/>
            <person name="Bohni R."/>
            <person name="Brown C.M."/>
            <person name="Cerny R."/>
            <person name="Horsnell T."/>
            <person name="Hutchison C.A. III"/>
            <person name="Kouzarides T."/>
            <person name="Martignetti J.A."/>
            <person name="Preddie E."/>
            <person name="Satchwell S.C."/>
            <person name="Tomlinson P."/>
            <person name="Weston K.M."/>
            <person name="Barrell B.G."/>
        </authorList>
    </citation>
    <scope>NUCLEOTIDE SEQUENCE [LARGE SCALE GENOMIC DNA]</scope>
</reference>
<proteinExistence type="predicted"/>
<organism>
    <name type="scientific">Human cytomegalovirus (strain AD169)</name>
    <name type="common">HHV-5</name>
    <name type="synonym">Human herpesvirus 5</name>
    <dbReference type="NCBI Taxonomy" id="10360"/>
    <lineage>
        <taxon>Viruses</taxon>
        <taxon>Duplodnaviria</taxon>
        <taxon>Heunggongvirae</taxon>
        <taxon>Peploviricota</taxon>
        <taxon>Herviviricetes</taxon>
        <taxon>Herpesvirales</taxon>
        <taxon>Orthoherpesviridae</taxon>
        <taxon>Betaherpesvirinae</taxon>
        <taxon>Cytomegalovirus</taxon>
        <taxon>Cytomegalovirus humanbeta5</taxon>
        <taxon>Human cytomegalovirus</taxon>
    </lineage>
</organism>
<name>UL126_HCMVA</name>
<organismHost>
    <name type="scientific">Homo sapiens</name>
    <name type="common">Human</name>
    <dbReference type="NCBI Taxonomy" id="9606"/>
</organismHost>